<comment type="function">
    <text evidence="1">Has a pivotal role in cytoprotective cellular mechanisms triggered by oxygen deprivation. May play a role as a molecular chaperone and participate in protein folding.</text>
</comment>
<comment type="subcellular location">
    <subcellularLocation>
        <location evidence="1">Endoplasmic reticulum lumen</location>
    </subcellularLocation>
</comment>
<comment type="similarity">
    <text evidence="5">Belongs to the heat shock protein 70 family.</text>
</comment>
<evidence type="ECO:0000250" key="1"/>
<evidence type="ECO:0000250" key="2">
    <source>
        <dbReference type="UniProtKB" id="Q9Y4L1"/>
    </source>
</evidence>
<evidence type="ECO:0000255" key="3"/>
<evidence type="ECO:0000256" key="4">
    <source>
        <dbReference type="SAM" id="MobiDB-lite"/>
    </source>
</evidence>
<evidence type="ECO:0000305" key="5"/>
<feature type="signal peptide" evidence="3">
    <location>
        <begin position="1"/>
        <end position="22"/>
    </location>
</feature>
<feature type="chain" id="PRO_0000379423" description="Hypoxia up-regulated protein 1">
    <location>
        <begin position="23"/>
        <end position="643"/>
    </location>
</feature>
<feature type="region of interest" description="Disordered" evidence="4">
    <location>
        <begin position="565"/>
        <end position="643"/>
    </location>
</feature>
<feature type="compositionally biased region" description="Acidic residues" evidence="4">
    <location>
        <begin position="590"/>
        <end position="610"/>
    </location>
</feature>
<feature type="compositionally biased region" description="Basic and acidic residues" evidence="4">
    <location>
        <begin position="611"/>
        <end position="621"/>
    </location>
</feature>
<feature type="compositionally biased region" description="Basic and acidic residues" evidence="4">
    <location>
        <begin position="630"/>
        <end position="643"/>
    </location>
</feature>
<feature type="non-terminal residue">
    <location>
        <position position="643"/>
    </location>
</feature>
<dbReference type="EMBL" id="BC121233">
    <property type="protein sequence ID" value="AAI21234.1"/>
    <property type="status" value="ALT_TERM"/>
    <property type="molecule type" value="mRNA"/>
</dbReference>
<dbReference type="RefSeq" id="NP_001263614.1">
    <property type="nucleotide sequence ID" value="NM_001276685.2"/>
</dbReference>
<dbReference type="RefSeq" id="NP_001263615.1">
    <property type="nucleotide sequence ID" value="NM_001276686.1"/>
</dbReference>
<dbReference type="SMR" id="Q0VA61"/>
<dbReference type="STRING" id="8364.ENSXETP00000021236"/>
<dbReference type="PaxDb" id="8364-ENSXETP00000022209"/>
<dbReference type="GeneID" id="779444"/>
<dbReference type="KEGG" id="xtr:779444"/>
<dbReference type="CTD" id="10525"/>
<dbReference type="eggNOG" id="KOG0104">
    <property type="taxonomic scope" value="Eukaryota"/>
</dbReference>
<dbReference type="InParanoid" id="Q0VA61"/>
<dbReference type="OrthoDB" id="10262720at2759"/>
<dbReference type="Proteomes" id="UP000008143">
    <property type="component" value="Chromosome 7"/>
</dbReference>
<dbReference type="GO" id="GO:0005788">
    <property type="term" value="C:endoplasmic reticulum lumen"/>
    <property type="evidence" value="ECO:0007669"/>
    <property type="project" value="UniProtKB-SubCell"/>
</dbReference>
<dbReference type="GO" id="GO:0005524">
    <property type="term" value="F:ATP binding"/>
    <property type="evidence" value="ECO:0007669"/>
    <property type="project" value="UniProtKB-KW"/>
</dbReference>
<dbReference type="GO" id="GO:0140662">
    <property type="term" value="F:ATP-dependent protein folding chaperone"/>
    <property type="evidence" value="ECO:0007669"/>
    <property type="project" value="InterPro"/>
</dbReference>
<dbReference type="CDD" id="cd10230">
    <property type="entry name" value="ASKHA_NBD_HSP70_HYOU1"/>
    <property type="match status" value="1"/>
</dbReference>
<dbReference type="FunFam" id="2.60.34.10:FF:000009">
    <property type="entry name" value="Hypoxia up-regulated protein 1"/>
    <property type="match status" value="1"/>
</dbReference>
<dbReference type="FunFam" id="3.90.640.10:FF:000012">
    <property type="entry name" value="Hypoxia up-regulated protein 1"/>
    <property type="match status" value="1"/>
</dbReference>
<dbReference type="FunFam" id="3.30.30.30:FF:000004">
    <property type="entry name" value="hypoxia up-regulated protein 1"/>
    <property type="match status" value="1"/>
</dbReference>
<dbReference type="Gene3D" id="3.30.30.30">
    <property type="match status" value="1"/>
</dbReference>
<dbReference type="Gene3D" id="3.30.420.40">
    <property type="match status" value="2"/>
</dbReference>
<dbReference type="Gene3D" id="3.90.640.10">
    <property type="entry name" value="Actin, Chain A, domain 4"/>
    <property type="match status" value="1"/>
</dbReference>
<dbReference type="Gene3D" id="2.60.34.10">
    <property type="entry name" value="Substrate Binding Domain Of DNAk, Chain A, domain 1"/>
    <property type="match status" value="1"/>
</dbReference>
<dbReference type="InterPro" id="IPR043129">
    <property type="entry name" value="ATPase_NBD"/>
</dbReference>
<dbReference type="InterPro" id="IPR018181">
    <property type="entry name" value="Heat_shock_70_CS"/>
</dbReference>
<dbReference type="InterPro" id="IPR029047">
    <property type="entry name" value="HSP70_peptide-bd_sf"/>
</dbReference>
<dbReference type="InterPro" id="IPR013126">
    <property type="entry name" value="Hsp_70_fam"/>
</dbReference>
<dbReference type="PANTHER" id="PTHR45639">
    <property type="entry name" value="HSC70CB, ISOFORM G-RELATED"/>
    <property type="match status" value="1"/>
</dbReference>
<dbReference type="PANTHER" id="PTHR45639:SF3">
    <property type="entry name" value="HYPOXIA UP-REGULATED PROTEIN 1"/>
    <property type="match status" value="1"/>
</dbReference>
<dbReference type="Pfam" id="PF00012">
    <property type="entry name" value="HSP70"/>
    <property type="match status" value="1"/>
</dbReference>
<dbReference type="PRINTS" id="PR00301">
    <property type="entry name" value="HEATSHOCK70"/>
</dbReference>
<dbReference type="SUPFAM" id="SSF53067">
    <property type="entry name" value="Actin-like ATPase domain"/>
    <property type="match status" value="2"/>
</dbReference>
<dbReference type="PROSITE" id="PS01036">
    <property type="entry name" value="HSP70_3"/>
    <property type="match status" value="1"/>
</dbReference>
<protein>
    <recommendedName>
        <fullName>Hypoxia up-regulated protein 1</fullName>
    </recommendedName>
</protein>
<proteinExistence type="evidence at transcript level"/>
<sequence length="643" mass="72301">MRPLVCVFTMFLLALLSSNTESVAVMSVDMGSEWMKIAIVKPGVPMEIVLNKESRRKTPVAIALKENERLFGDSALGMAVKNPKVTFRYFQDLLGKRADNPHVKAFEARFPEYQLVKDEHRETVLFKLSEELTYSPEELLGMMLNYSRSLAEEFAEQPVKDVVITVPAFFNQAERRAVLQAAQLSDLKVLQLINDNTAVALNYGVFRRKDINATAQNIMFYEMGSRSTICTIVTYQSVKTKDSGMQPQLQIRGVGFDRTLGGIEMDLRLRDHLAKLFNEQKKSKKDVRENQRAMSKLLKEANRVKTILSANNDHMAQIEGLMDDIDFKAKVTRQELEDLCADLFNRVSAPVQHALSSAEMKMEEIDQVILVGGATRVPKVQELLLKVVGKEELGKNINADEAAAMGAVYQAAALSKAFKVKPFIVRDAAIFPIQVEFTREVEEEDHSKSLKHNKRILFQRLAPYPQRKVITFNRYTDNFAFSINYGDLSYLGPDDLKVFGSLNLTTVKLNGVGESFQKRSDYESKGIKAHFNMDESGLLTLDRVEAVFETVVDEKPEQESTLTKLGNTISSLFGGGSSVPETKENATDSVQEEDEVPTEPTKEEEQESADAADKQKDKEKGTTATNEEEEGKKEEEKSEPQEE</sequence>
<accession>Q0VA61</accession>
<reference key="1">
    <citation type="submission" date="2006-08" db="EMBL/GenBank/DDBJ databases">
        <authorList>
            <consortium name="NIH - Xenopus Gene Collection (XGC) project"/>
        </authorList>
    </citation>
    <scope>NUCLEOTIDE SEQUENCE [LARGE SCALE MRNA]</scope>
    <source>
        <tissue>Brain</tissue>
    </source>
</reference>
<keyword id="KW-0067">ATP-binding</keyword>
<keyword id="KW-0143">Chaperone</keyword>
<keyword id="KW-0256">Endoplasmic reticulum</keyword>
<keyword id="KW-0547">Nucleotide-binding</keyword>
<keyword id="KW-1185">Reference proteome</keyword>
<keyword id="KW-0732">Signal</keyword>
<name>HYOU1_XENTR</name>
<gene>
    <name type="primary">hyou1</name>
    <name evidence="2" type="synonym">hsph4</name>
</gene>
<organism>
    <name type="scientific">Xenopus tropicalis</name>
    <name type="common">Western clawed frog</name>
    <name type="synonym">Silurana tropicalis</name>
    <dbReference type="NCBI Taxonomy" id="8364"/>
    <lineage>
        <taxon>Eukaryota</taxon>
        <taxon>Metazoa</taxon>
        <taxon>Chordata</taxon>
        <taxon>Craniata</taxon>
        <taxon>Vertebrata</taxon>
        <taxon>Euteleostomi</taxon>
        <taxon>Amphibia</taxon>
        <taxon>Batrachia</taxon>
        <taxon>Anura</taxon>
        <taxon>Pipoidea</taxon>
        <taxon>Pipidae</taxon>
        <taxon>Xenopodinae</taxon>
        <taxon>Xenopus</taxon>
        <taxon>Silurana</taxon>
    </lineage>
</organism>